<proteinExistence type="inferred from homology"/>
<evidence type="ECO:0000255" key="1">
    <source>
        <dbReference type="HAMAP-Rule" id="MF_02007"/>
    </source>
</evidence>
<gene>
    <name evidence="1" type="primary">tyrS</name>
    <name type="ordered locus">Pro_1410</name>
</gene>
<name>SYY_PROMA</name>
<protein>
    <recommendedName>
        <fullName evidence="1">Tyrosine--tRNA ligase</fullName>
        <ecNumber evidence="1">6.1.1.1</ecNumber>
    </recommendedName>
    <alternativeName>
        <fullName evidence="1">Tyrosyl-tRNA synthetase</fullName>
        <shortName evidence="1">TyrRS</shortName>
    </alternativeName>
</protein>
<dbReference type="EC" id="6.1.1.1" evidence="1"/>
<dbReference type="EMBL" id="AE017126">
    <property type="protein sequence ID" value="AAQ00454.1"/>
    <property type="molecule type" value="Genomic_DNA"/>
</dbReference>
<dbReference type="RefSeq" id="NP_875801.1">
    <property type="nucleotide sequence ID" value="NC_005042.1"/>
</dbReference>
<dbReference type="RefSeq" id="WP_011125561.1">
    <property type="nucleotide sequence ID" value="NC_005042.1"/>
</dbReference>
<dbReference type="SMR" id="Q7VAP7"/>
<dbReference type="STRING" id="167539.Pro_1410"/>
<dbReference type="EnsemblBacteria" id="AAQ00454">
    <property type="protein sequence ID" value="AAQ00454"/>
    <property type="gene ID" value="Pro_1410"/>
</dbReference>
<dbReference type="KEGG" id="pma:Pro_1410"/>
<dbReference type="PATRIC" id="fig|167539.5.peg.1476"/>
<dbReference type="eggNOG" id="COG0162">
    <property type="taxonomic scope" value="Bacteria"/>
</dbReference>
<dbReference type="HOGENOM" id="CLU_024003_5_0_3"/>
<dbReference type="OrthoDB" id="9804243at2"/>
<dbReference type="Proteomes" id="UP000001420">
    <property type="component" value="Chromosome"/>
</dbReference>
<dbReference type="GO" id="GO:0005829">
    <property type="term" value="C:cytosol"/>
    <property type="evidence" value="ECO:0007669"/>
    <property type="project" value="TreeGrafter"/>
</dbReference>
<dbReference type="GO" id="GO:0005524">
    <property type="term" value="F:ATP binding"/>
    <property type="evidence" value="ECO:0007669"/>
    <property type="project" value="UniProtKB-UniRule"/>
</dbReference>
<dbReference type="GO" id="GO:0003723">
    <property type="term" value="F:RNA binding"/>
    <property type="evidence" value="ECO:0007669"/>
    <property type="project" value="UniProtKB-KW"/>
</dbReference>
<dbReference type="GO" id="GO:0004831">
    <property type="term" value="F:tyrosine-tRNA ligase activity"/>
    <property type="evidence" value="ECO:0007669"/>
    <property type="project" value="UniProtKB-UniRule"/>
</dbReference>
<dbReference type="GO" id="GO:0006437">
    <property type="term" value="P:tyrosyl-tRNA aminoacylation"/>
    <property type="evidence" value="ECO:0007669"/>
    <property type="project" value="UniProtKB-UniRule"/>
</dbReference>
<dbReference type="CDD" id="cd00805">
    <property type="entry name" value="TyrRS_core"/>
    <property type="match status" value="1"/>
</dbReference>
<dbReference type="Gene3D" id="3.40.50.620">
    <property type="entry name" value="HUPs"/>
    <property type="match status" value="1"/>
</dbReference>
<dbReference type="Gene3D" id="3.10.290.10">
    <property type="entry name" value="RNA-binding S4 domain"/>
    <property type="match status" value="1"/>
</dbReference>
<dbReference type="Gene3D" id="1.10.240.10">
    <property type="entry name" value="Tyrosyl-Transfer RNA Synthetase"/>
    <property type="match status" value="1"/>
</dbReference>
<dbReference type="HAMAP" id="MF_02007">
    <property type="entry name" value="Tyr_tRNA_synth_type2"/>
    <property type="match status" value="1"/>
</dbReference>
<dbReference type="InterPro" id="IPR002305">
    <property type="entry name" value="aa-tRNA-synth_Ic"/>
</dbReference>
<dbReference type="InterPro" id="IPR014729">
    <property type="entry name" value="Rossmann-like_a/b/a_fold"/>
</dbReference>
<dbReference type="InterPro" id="IPR036986">
    <property type="entry name" value="S4_RNA-bd_sf"/>
</dbReference>
<dbReference type="InterPro" id="IPR054608">
    <property type="entry name" value="SYY-like_C"/>
</dbReference>
<dbReference type="InterPro" id="IPR002307">
    <property type="entry name" value="Tyr-tRNA-ligase"/>
</dbReference>
<dbReference type="InterPro" id="IPR024088">
    <property type="entry name" value="Tyr-tRNA-ligase_bac-type"/>
</dbReference>
<dbReference type="InterPro" id="IPR024108">
    <property type="entry name" value="Tyr-tRNA-ligase_bac_2"/>
</dbReference>
<dbReference type="NCBIfam" id="TIGR00234">
    <property type="entry name" value="tyrS"/>
    <property type="match status" value="1"/>
</dbReference>
<dbReference type="PANTHER" id="PTHR11766:SF1">
    <property type="entry name" value="TYROSINE--TRNA LIGASE"/>
    <property type="match status" value="1"/>
</dbReference>
<dbReference type="PANTHER" id="PTHR11766">
    <property type="entry name" value="TYROSYL-TRNA SYNTHETASE"/>
    <property type="match status" value="1"/>
</dbReference>
<dbReference type="Pfam" id="PF22421">
    <property type="entry name" value="SYY_C-terminal"/>
    <property type="match status" value="1"/>
</dbReference>
<dbReference type="Pfam" id="PF00579">
    <property type="entry name" value="tRNA-synt_1b"/>
    <property type="match status" value="1"/>
</dbReference>
<dbReference type="PRINTS" id="PR01040">
    <property type="entry name" value="TRNASYNTHTYR"/>
</dbReference>
<dbReference type="SUPFAM" id="SSF55174">
    <property type="entry name" value="Alpha-L RNA-binding motif"/>
    <property type="match status" value="1"/>
</dbReference>
<dbReference type="SUPFAM" id="SSF52374">
    <property type="entry name" value="Nucleotidylyl transferase"/>
    <property type="match status" value="1"/>
</dbReference>
<dbReference type="PROSITE" id="PS50889">
    <property type="entry name" value="S4"/>
    <property type="match status" value="1"/>
</dbReference>
<organism>
    <name type="scientific">Prochlorococcus marinus (strain SARG / CCMP1375 / SS120)</name>
    <dbReference type="NCBI Taxonomy" id="167539"/>
    <lineage>
        <taxon>Bacteria</taxon>
        <taxon>Bacillati</taxon>
        <taxon>Cyanobacteriota</taxon>
        <taxon>Cyanophyceae</taxon>
        <taxon>Synechococcales</taxon>
        <taxon>Prochlorococcaceae</taxon>
        <taxon>Prochlorococcus</taxon>
    </lineage>
</organism>
<feature type="chain" id="PRO_0000236744" description="Tyrosine--tRNA ligase">
    <location>
        <begin position="1"/>
        <end position="416"/>
    </location>
</feature>
<feature type="domain" description="S4 RNA-binding" evidence="1">
    <location>
        <begin position="352"/>
        <end position="416"/>
    </location>
</feature>
<feature type="short sequence motif" description="'HIGH' region">
    <location>
        <begin position="55"/>
        <end position="64"/>
    </location>
</feature>
<feature type="short sequence motif" description="'KMSKS' region">
    <location>
        <begin position="249"/>
        <end position="253"/>
    </location>
</feature>
<feature type="binding site" evidence="1">
    <location>
        <position position="252"/>
    </location>
    <ligand>
        <name>ATP</name>
        <dbReference type="ChEBI" id="CHEBI:30616"/>
    </ligand>
</feature>
<sequence length="416" mass="46011">MLEQLTSLPDWLARGVADLFPLATNNSEKDQSLLLRLSQASRSNVPLRVKLGIDPTGSEIHLGHSIIFRKLRAFQDAGHTAILIIGDFTARIGDPTGKSKTRVQLSPEEVEKNSENYLNQLGKGQSKETSLLDFETEGRLEVRRNSEWLEGFDMVQIIDLLSKSTVGQMLAKEEFANRYTSGTSIALHEFLYPLFQGYDSVAVQADVELGGVDQKFNVAMGRDMQRHFSQKPQFGLLLPILVGLDGVQKMSKSLGNTVGLAEDALSMYSKLEKVPDSQVNNYLTLLTDCEIRDLTLNARELQKFMALNVTAQFHGLSVAKIAQKDASKIVSGLKETVEDVPVLSVSNVNFPTKAFHLLSSIGLCSSSSNARRQIQGGALRIDGKKILDPNFEFVDQKDIVGKILQLGKKTFRRISN</sequence>
<comment type="function">
    <text evidence="1">Catalyzes the attachment of tyrosine to tRNA(Tyr) in a two-step reaction: tyrosine is first activated by ATP to form Tyr-AMP and then transferred to the acceptor end of tRNA(Tyr).</text>
</comment>
<comment type="catalytic activity">
    <reaction evidence="1">
        <text>tRNA(Tyr) + L-tyrosine + ATP = L-tyrosyl-tRNA(Tyr) + AMP + diphosphate + H(+)</text>
        <dbReference type="Rhea" id="RHEA:10220"/>
        <dbReference type="Rhea" id="RHEA-COMP:9706"/>
        <dbReference type="Rhea" id="RHEA-COMP:9707"/>
        <dbReference type="ChEBI" id="CHEBI:15378"/>
        <dbReference type="ChEBI" id="CHEBI:30616"/>
        <dbReference type="ChEBI" id="CHEBI:33019"/>
        <dbReference type="ChEBI" id="CHEBI:58315"/>
        <dbReference type="ChEBI" id="CHEBI:78442"/>
        <dbReference type="ChEBI" id="CHEBI:78536"/>
        <dbReference type="ChEBI" id="CHEBI:456215"/>
        <dbReference type="EC" id="6.1.1.1"/>
    </reaction>
</comment>
<comment type="subunit">
    <text evidence="1">Homodimer.</text>
</comment>
<comment type="subcellular location">
    <subcellularLocation>
        <location evidence="1">Cytoplasm</location>
    </subcellularLocation>
</comment>
<comment type="similarity">
    <text evidence="1">Belongs to the class-I aminoacyl-tRNA synthetase family. TyrS type 2 subfamily.</text>
</comment>
<keyword id="KW-0030">Aminoacyl-tRNA synthetase</keyword>
<keyword id="KW-0067">ATP-binding</keyword>
<keyword id="KW-0963">Cytoplasm</keyword>
<keyword id="KW-0436">Ligase</keyword>
<keyword id="KW-0547">Nucleotide-binding</keyword>
<keyword id="KW-0648">Protein biosynthesis</keyword>
<keyword id="KW-1185">Reference proteome</keyword>
<keyword id="KW-0694">RNA-binding</keyword>
<accession>Q7VAP7</accession>
<reference key="1">
    <citation type="journal article" date="2003" name="Proc. Natl. Acad. Sci. U.S.A.">
        <title>Genome sequence of the cyanobacterium Prochlorococcus marinus SS120, a nearly minimal oxyphototrophic genome.</title>
        <authorList>
            <person name="Dufresne A."/>
            <person name="Salanoubat M."/>
            <person name="Partensky F."/>
            <person name="Artiguenave F."/>
            <person name="Axmann I.M."/>
            <person name="Barbe V."/>
            <person name="Duprat S."/>
            <person name="Galperin M.Y."/>
            <person name="Koonin E.V."/>
            <person name="Le Gall F."/>
            <person name="Makarova K.S."/>
            <person name="Ostrowski M."/>
            <person name="Oztas S."/>
            <person name="Robert C."/>
            <person name="Rogozin I.B."/>
            <person name="Scanlan D.J."/>
            <person name="Tandeau de Marsac N."/>
            <person name="Weissenbach J."/>
            <person name="Wincker P."/>
            <person name="Wolf Y.I."/>
            <person name="Hess W.R."/>
        </authorList>
    </citation>
    <scope>NUCLEOTIDE SEQUENCE [LARGE SCALE GENOMIC DNA]</scope>
    <source>
        <strain>SARG / CCMP1375 / SS120</strain>
    </source>
</reference>